<gene>
    <name evidence="2" type="primary">ACR10</name>
    <name evidence="5" type="ordered locus">At2g36840</name>
</gene>
<accession>Q9SJM1</accession>
<accession>Q8LG61</accession>
<reference key="1">
    <citation type="journal article" date="2011" name="BMC Plant Biol.">
        <title>The ACR11 encodes a novel type of chloroplastic ACT domain repeat protein that is coordinately expressed with GLN2 in Arabidopsis.</title>
        <authorList>
            <person name="Sung T.Y."/>
            <person name="Chung T.Y."/>
            <person name="Hsu C.P."/>
            <person name="Hsieh M.H."/>
        </authorList>
    </citation>
    <scope>NUCLEOTIDE SEQUENCE [MRNA]</scope>
    <scope>FUNCTION</scope>
</reference>
<reference key="2">
    <citation type="journal article" date="1999" name="Nature">
        <title>Sequence and analysis of chromosome 2 of the plant Arabidopsis thaliana.</title>
        <authorList>
            <person name="Lin X."/>
            <person name="Kaul S."/>
            <person name="Rounsley S.D."/>
            <person name="Shea T.P."/>
            <person name="Benito M.-I."/>
            <person name="Town C.D."/>
            <person name="Fujii C.Y."/>
            <person name="Mason T.M."/>
            <person name="Bowman C.L."/>
            <person name="Barnstead M.E."/>
            <person name="Feldblyum T.V."/>
            <person name="Buell C.R."/>
            <person name="Ketchum K.A."/>
            <person name="Lee J.J."/>
            <person name="Ronning C.M."/>
            <person name="Koo H.L."/>
            <person name="Moffat K.S."/>
            <person name="Cronin L.A."/>
            <person name="Shen M."/>
            <person name="Pai G."/>
            <person name="Van Aken S."/>
            <person name="Umayam L."/>
            <person name="Tallon L.J."/>
            <person name="Gill J.E."/>
            <person name="Adams M.D."/>
            <person name="Carrera A.J."/>
            <person name="Creasy T.H."/>
            <person name="Goodman H.M."/>
            <person name="Somerville C.R."/>
            <person name="Copenhaver G.P."/>
            <person name="Preuss D."/>
            <person name="Nierman W.C."/>
            <person name="White O."/>
            <person name="Eisen J.A."/>
            <person name="Salzberg S.L."/>
            <person name="Fraser C.M."/>
            <person name="Venter J.C."/>
        </authorList>
    </citation>
    <scope>NUCLEOTIDE SEQUENCE [LARGE SCALE GENOMIC DNA]</scope>
    <source>
        <strain>cv. Columbia</strain>
    </source>
</reference>
<reference key="3">
    <citation type="journal article" date="2017" name="Plant J.">
        <title>Araport11: a complete reannotation of the Arabidopsis thaliana reference genome.</title>
        <authorList>
            <person name="Cheng C.Y."/>
            <person name="Krishnakumar V."/>
            <person name="Chan A.P."/>
            <person name="Thibaud-Nissen F."/>
            <person name="Schobel S."/>
            <person name="Town C.D."/>
        </authorList>
    </citation>
    <scope>GENOME REANNOTATION</scope>
    <source>
        <strain>cv. Columbia</strain>
    </source>
</reference>
<reference key="4">
    <citation type="journal article" date="2003" name="Science">
        <title>Empirical analysis of transcriptional activity in the Arabidopsis genome.</title>
        <authorList>
            <person name="Yamada K."/>
            <person name="Lim J."/>
            <person name="Dale J.M."/>
            <person name="Chen H."/>
            <person name="Shinn P."/>
            <person name="Palm C.J."/>
            <person name="Southwick A.M."/>
            <person name="Wu H.C."/>
            <person name="Kim C.J."/>
            <person name="Nguyen M."/>
            <person name="Pham P.K."/>
            <person name="Cheuk R.F."/>
            <person name="Karlin-Newmann G."/>
            <person name="Liu S.X."/>
            <person name="Lam B."/>
            <person name="Sakano H."/>
            <person name="Wu T."/>
            <person name="Yu G."/>
            <person name="Miranda M."/>
            <person name="Quach H.L."/>
            <person name="Tripp M."/>
            <person name="Chang C.H."/>
            <person name="Lee J.M."/>
            <person name="Toriumi M.J."/>
            <person name="Chan M.M."/>
            <person name="Tang C.C."/>
            <person name="Onodera C.S."/>
            <person name="Deng J.M."/>
            <person name="Akiyama K."/>
            <person name="Ansari Y."/>
            <person name="Arakawa T."/>
            <person name="Banh J."/>
            <person name="Banno F."/>
            <person name="Bowser L."/>
            <person name="Brooks S.Y."/>
            <person name="Carninci P."/>
            <person name="Chao Q."/>
            <person name="Choy N."/>
            <person name="Enju A."/>
            <person name="Goldsmith A.D."/>
            <person name="Gurjal M."/>
            <person name="Hansen N.F."/>
            <person name="Hayashizaki Y."/>
            <person name="Johnson-Hopson C."/>
            <person name="Hsuan V.W."/>
            <person name="Iida K."/>
            <person name="Karnes M."/>
            <person name="Khan S."/>
            <person name="Koesema E."/>
            <person name="Ishida J."/>
            <person name="Jiang P.X."/>
            <person name="Jones T."/>
            <person name="Kawai J."/>
            <person name="Kamiya A."/>
            <person name="Meyers C."/>
            <person name="Nakajima M."/>
            <person name="Narusaka M."/>
            <person name="Seki M."/>
            <person name="Sakurai T."/>
            <person name="Satou M."/>
            <person name="Tamse R."/>
            <person name="Vaysberg M."/>
            <person name="Wallender E.K."/>
            <person name="Wong C."/>
            <person name="Yamamura Y."/>
            <person name="Yuan S."/>
            <person name="Shinozaki K."/>
            <person name="Davis R.W."/>
            <person name="Theologis A."/>
            <person name="Ecker J.R."/>
        </authorList>
    </citation>
    <scope>NUCLEOTIDE SEQUENCE [LARGE SCALE MRNA]</scope>
    <source>
        <strain>cv. Columbia</strain>
    </source>
</reference>
<reference key="5">
    <citation type="submission" date="2002-03" db="EMBL/GenBank/DDBJ databases">
        <title>Full-length cDNA from Arabidopsis thaliana.</title>
        <authorList>
            <person name="Brover V.V."/>
            <person name="Troukhan M.E."/>
            <person name="Alexandrov N.A."/>
            <person name="Lu Y.-P."/>
            <person name="Flavell R.B."/>
            <person name="Feldmann K.A."/>
        </authorList>
    </citation>
    <scope>NUCLEOTIDE SEQUENCE [LARGE SCALE MRNA]</scope>
</reference>
<keyword id="KW-1185">Reference proteome</keyword>
<keyword id="KW-0677">Repeat</keyword>
<organism>
    <name type="scientific">Arabidopsis thaliana</name>
    <name type="common">Mouse-ear cress</name>
    <dbReference type="NCBI Taxonomy" id="3702"/>
    <lineage>
        <taxon>Eukaryota</taxon>
        <taxon>Viridiplantae</taxon>
        <taxon>Streptophyta</taxon>
        <taxon>Embryophyta</taxon>
        <taxon>Tracheophyta</taxon>
        <taxon>Spermatophyta</taxon>
        <taxon>Magnoliopsida</taxon>
        <taxon>eudicotyledons</taxon>
        <taxon>Gunneridae</taxon>
        <taxon>Pentapetalae</taxon>
        <taxon>rosids</taxon>
        <taxon>malvids</taxon>
        <taxon>Brassicales</taxon>
        <taxon>Brassicaceae</taxon>
        <taxon>Camelineae</taxon>
        <taxon>Arabidopsis</taxon>
    </lineage>
</organism>
<evidence type="ECO:0000255" key="1">
    <source>
        <dbReference type="PROSITE-ProRule" id="PRU01007"/>
    </source>
</evidence>
<evidence type="ECO:0000303" key="2">
    <source>
    </source>
</evidence>
<evidence type="ECO:0000305" key="3"/>
<evidence type="ECO:0000305" key="4">
    <source>
    </source>
</evidence>
<evidence type="ECO:0000312" key="5">
    <source>
        <dbReference type="Araport" id="AT2G36840"/>
    </source>
</evidence>
<proteinExistence type="evidence at transcript level"/>
<sequence>MGILSDDVVIISQSEKEGDPSVITINCPDKTGLGCDLCRILLFFGLNIVRGDVSTDGKWCYLVFWVIGKPNTRWNLLKMRLVEASPSFSWAFGISRCYLSDSESQPPKLPDLFLLKLACSDRTGLLYDVTEVLYKLEINIEKVKISTTPDGKVMDLFFVTDTRELLGTVKRRNEVYEYLRDAIGDSMISYDIELVGPEITACSTSSSVAETLFSSDVSGEHSSGLHTSSNVSIAVDNSLSSAHTLIHITCQDHKGLLYDIMRTFKDFNIQISYGRFTIKLGKNCEIDLFIVQSDGRKILDSSKLNALITRLRAELQQPLRVVMMNRGPDTELLVTNPVELSGKGRPQVFHDIALALKKIDTCIFSAEIGRHVTGDREWEVYKVLINEEDSLPIPRSKIEEEVWKTLMGWE</sequence>
<feature type="chain" id="PRO_0000431464" description="ACT domain-containing protein ACR10">
    <location>
        <begin position="1"/>
        <end position="410"/>
    </location>
</feature>
<feature type="domain" description="ACT 1" evidence="4">
    <location>
        <begin position="22"/>
        <end position="105"/>
    </location>
</feature>
<feature type="domain" description="ACT 2" evidence="1">
    <location>
        <begin position="114"/>
        <end position="197"/>
    </location>
</feature>
<feature type="domain" description="ACT 3" evidence="1">
    <location>
        <begin position="245"/>
        <end position="324"/>
    </location>
</feature>
<feature type="sequence conflict" description="In Ref. 5; AAM61017." evidence="3" ref="5">
    <original>L</original>
    <variation>R</variation>
    <location>
        <position position="280"/>
    </location>
</feature>
<name>ACR10_ARATH</name>
<comment type="function">
    <text evidence="2">May bind amino acids.</text>
</comment>
<dbReference type="EMBL" id="JF797175">
    <property type="protein sequence ID" value="AEP31951.1"/>
    <property type="molecule type" value="mRNA"/>
</dbReference>
<dbReference type="EMBL" id="AC006922">
    <property type="protein sequence ID" value="AAD31570.1"/>
    <property type="molecule type" value="Genomic_DNA"/>
</dbReference>
<dbReference type="EMBL" id="CP002685">
    <property type="protein sequence ID" value="AEC09305.1"/>
    <property type="molecule type" value="Genomic_DNA"/>
</dbReference>
<dbReference type="EMBL" id="AY093210">
    <property type="protein sequence ID" value="AAM13209.1"/>
    <property type="molecule type" value="mRNA"/>
</dbReference>
<dbReference type="EMBL" id="BT000205">
    <property type="protein sequence ID" value="AAN15524.1"/>
    <property type="molecule type" value="mRNA"/>
</dbReference>
<dbReference type="EMBL" id="AY084444">
    <property type="protein sequence ID" value="AAM61017.1"/>
    <property type="molecule type" value="mRNA"/>
</dbReference>
<dbReference type="PIR" id="D84785">
    <property type="entry name" value="D84785"/>
</dbReference>
<dbReference type="RefSeq" id="NP_030235.1">
    <property type="nucleotide sequence ID" value="NM_129240.3"/>
</dbReference>
<dbReference type="SMR" id="Q9SJM1"/>
<dbReference type="FunCoup" id="Q9SJM1">
    <property type="interactions" value="1477"/>
</dbReference>
<dbReference type="IntAct" id="Q9SJM1">
    <property type="interactions" value="1"/>
</dbReference>
<dbReference type="STRING" id="3702.Q9SJM1"/>
<dbReference type="iPTMnet" id="Q9SJM1"/>
<dbReference type="PaxDb" id="3702-AT2G36840.1"/>
<dbReference type="ProteomicsDB" id="244708"/>
<dbReference type="EnsemblPlants" id="AT2G36840.1">
    <property type="protein sequence ID" value="AT2G36840.1"/>
    <property type="gene ID" value="AT2G36840"/>
</dbReference>
<dbReference type="GeneID" id="818257"/>
<dbReference type="Gramene" id="AT2G36840.1">
    <property type="protein sequence ID" value="AT2G36840.1"/>
    <property type="gene ID" value="AT2G36840"/>
</dbReference>
<dbReference type="KEGG" id="ath:AT2G36840"/>
<dbReference type="Araport" id="AT2G36840"/>
<dbReference type="TAIR" id="AT2G36840">
    <property type="gene designation" value="ACR10"/>
</dbReference>
<dbReference type="eggNOG" id="ENOG502QPK3">
    <property type="taxonomic scope" value="Eukaryota"/>
</dbReference>
<dbReference type="HOGENOM" id="CLU_050600_0_0_1"/>
<dbReference type="InParanoid" id="Q9SJM1"/>
<dbReference type="OMA" id="QIGDREW"/>
<dbReference type="OrthoDB" id="2019824at2759"/>
<dbReference type="PhylomeDB" id="Q9SJM1"/>
<dbReference type="PRO" id="PR:Q9SJM1"/>
<dbReference type="Proteomes" id="UP000006548">
    <property type="component" value="Chromosome 2"/>
</dbReference>
<dbReference type="ExpressionAtlas" id="Q9SJM1">
    <property type="expression patterns" value="baseline and differential"/>
</dbReference>
<dbReference type="CDD" id="cd04898">
    <property type="entry name" value="ACT_ACR-like_4"/>
    <property type="match status" value="1"/>
</dbReference>
<dbReference type="Gene3D" id="3.30.70.260">
    <property type="match status" value="1"/>
</dbReference>
<dbReference type="InterPro" id="IPR040217">
    <property type="entry name" value="ACR1-12"/>
</dbReference>
<dbReference type="InterPro" id="IPR056816">
    <property type="entry name" value="ACR2/9/10_N"/>
</dbReference>
<dbReference type="InterPro" id="IPR045865">
    <property type="entry name" value="ACT-like_dom_sf"/>
</dbReference>
<dbReference type="InterPro" id="IPR056805">
    <property type="entry name" value="ACT_ACR9/10_C"/>
</dbReference>
<dbReference type="InterPro" id="IPR002912">
    <property type="entry name" value="ACT_dom"/>
</dbReference>
<dbReference type="PANTHER" id="PTHR31096:SF23">
    <property type="entry name" value="ACT DOMAIN-CONTAINING PROTEIN ACR10"/>
    <property type="match status" value="1"/>
</dbReference>
<dbReference type="PANTHER" id="PTHR31096">
    <property type="entry name" value="ACT DOMAIN-CONTAINING PROTEIN ACR4-RELATED"/>
    <property type="match status" value="1"/>
</dbReference>
<dbReference type="Pfam" id="PF24914">
    <property type="entry name" value="ACR10_N"/>
    <property type="match status" value="1"/>
</dbReference>
<dbReference type="Pfam" id="PF01842">
    <property type="entry name" value="ACT"/>
    <property type="match status" value="1"/>
</dbReference>
<dbReference type="Pfam" id="PF24931">
    <property type="entry name" value="ACT_ACR9_3rd"/>
    <property type="match status" value="1"/>
</dbReference>
<dbReference type="Pfam" id="PF24926">
    <property type="entry name" value="ACT_ACR9_C"/>
    <property type="match status" value="1"/>
</dbReference>
<dbReference type="SUPFAM" id="SSF55021">
    <property type="entry name" value="ACT-like"/>
    <property type="match status" value="3"/>
</dbReference>
<dbReference type="PROSITE" id="PS51671">
    <property type="entry name" value="ACT"/>
    <property type="match status" value="2"/>
</dbReference>
<protein>
    <recommendedName>
        <fullName evidence="3">ACT domain-containing protein ACR10</fullName>
    </recommendedName>
    <alternativeName>
        <fullName evidence="2">Protein ACT DOMAIN REPEATS 10</fullName>
    </alternativeName>
</protein>